<evidence type="ECO:0000255" key="1"/>
<evidence type="ECO:0000305" key="2"/>
<proteinExistence type="inferred from homology"/>
<comment type="subcellular location">
    <subcellularLocation>
        <location evidence="2">Membrane</location>
        <topology evidence="2">Multi-pass membrane protein</topology>
    </subcellularLocation>
</comment>
<comment type="similarity">
    <text evidence="2">Belongs to the Ca(2+):cation antiporter (CaCA) (TC 2.A.19) family.</text>
</comment>
<accession>P34315</accession>
<sequence length="590" mass="66170">MRIHFFAFLIILSLVGCDGWQADVGKLVRKWNNQRTIDGNDIEKCIPDDGEQCTIQAGWNSTQVCEYVKCNDDNCEGGGYVLWTRYVECASSPAVRIILIITGVIYMLVLFIMVSSAADDFFSPSISSIVAHLRISESVAGVTFMAFGNGAPDVFGAIASVLSSPTPKADLALGELFGAGLFVTTMVLAVTIFTRPFKAEVFSSIRDIAFYLVALAFLAFCFVYYDHVEIWMPITFLGVYLIYVCTVILSQILHNRHKKDEEKVDEVKTVDTDSLEDDDDIYVSHGHHVLHAHEVMKMEAEIEAVEPLKTWSFRGVVHDFKEHLKPWPSMDEWDEMNIFQKVIAVLNTIPNFLFKLTIPHSEQPWSKPITLLQCLICPVFLLFCIQVCSISPFPNSPGLWMYGLILSVLLTAAVLFFTELHKEPPFYKSLISYAGFLMSIAWIYLISSEVVNVVTMLGVVSRVSHEVLGLTILAWSNSIGDLIADVSVAKQGYPRMAMAAAIGGQLFNLLIGFGLPFTIAKIQGKSISMIINPTYRLLMLFLAISLIFTLIAMFAQKYFLRRIHSYSLVFIYISFFVFIGLSLDDILVWN</sequence>
<name>NCX6_CAEEL</name>
<dbReference type="EMBL" id="Z29094">
    <property type="protein sequence ID" value="CAA82339.3"/>
    <property type="molecule type" value="Genomic_DNA"/>
</dbReference>
<dbReference type="PIR" id="S40705">
    <property type="entry name" value="S40705"/>
</dbReference>
<dbReference type="RefSeq" id="NP_499146.2">
    <property type="nucleotide sequence ID" value="NM_066745.3"/>
</dbReference>
<dbReference type="FunCoup" id="P34315">
    <property type="interactions" value="200"/>
</dbReference>
<dbReference type="STRING" id="6239.C07A9.4.1"/>
<dbReference type="PaxDb" id="6239-C07A9.4"/>
<dbReference type="PeptideAtlas" id="P34315"/>
<dbReference type="EnsemblMetazoa" id="C07A9.4.1">
    <property type="protein sequence ID" value="C07A9.4.1"/>
    <property type="gene ID" value="WBGene00003571"/>
</dbReference>
<dbReference type="GeneID" id="182354"/>
<dbReference type="KEGG" id="cel:CELE_C07A9.4"/>
<dbReference type="UCSC" id="C07A9.4">
    <property type="organism name" value="c. elegans"/>
</dbReference>
<dbReference type="AGR" id="WB:WBGene00003571"/>
<dbReference type="CTD" id="182354"/>
<dbReference type="WormBase" id="C07A9.4">
    <property type="protein sequence ID" value="CE33595"/>
    <property type="gene ID" value="WBGene00003571"/>
    <property type="gene designation" value="ncx-6"/>
</dbReference>
<dbReference type="eggNOG" id="KOG2399">
    <property type="taxonomic scope" value="Eukaryota"/>
</dbReference>
<dbReference type="GeneTree" id="ENSGT00970000196614"/>
<dbReference type="HOGENOM" id="CLU_004979_3_1_1"/>
<dbReference type="InParanoid" id="P34315"/>
<dbReference type="OMA" id="VAWAYVI"/>
<dbReference type="OrthoDB" id="407410at2759"/>
<dbReference type="PhylomeDB" id="P34315"/>
<dbReference type="PRO" id="PR:P34315"/>
<dbReference type="Proteomes" id="UP000001940">
    <property type="component" value="Chromosome III"/>
</dbReference>
<dbReference type="Bgee" id="WBGene00003571">
    <property type="expression patterns" value="Expressed in adult organism and 1 other cell type or tissue"/>
</dbReference>
<dbReference type="GO" id="GO:0016020">
    <property type="term" value="C:membrane"/>
    <property type="evidence" value="ECO:0000318"/>
    <property type="project" value="GO_Central"/>
</dbReference>
<dbReference type="GO" id="GO:0005432">
    <property type="term" value="F:calcium:sodium antiporter activity"/>
    <property type="evidence" value="ECO:0000318"/>
    <property type="project" value="GO_Central"/>
</dbReference>
<dbReference type="GO" id="GO:0006874">
    <property type="term" value="P:intracellular calcium ion homeostasis"/>
    <property type="evidence" value="ECO:0000318"/>
    <property type="project" value="GO_Central"/>
</dbReference>
<dbReference type="GO" id="GO:0006812">
    <property type="term" value="P:monoatomic cation transport"/>
    <property type="evidence" value="ECO:0000318"/>
    <property type="project" value="GO_Central"/>
</dbReference>
<dbReference type="Gene3D" id="1.20.1420.30">
    <property type="entry name" value="NCX, central ion-binding region"/>
    <property type="match status" value="2"/>
</dbReference>
<dbReference type="InterPro" id="IPR051359">
    <property type="entry name" value="CaCA_antiporter"/>
</dbReference>
<dbReference type="InterPro" id="IPR004837">
    <property type="entry name" value="NaCa_Exmemb"/>
</dbReference>
<dbReference type="InterPro" id="IPR044880">
    <property type="entry name" value="NCX_ion-bd_dom_sf"/>
</dbReference>
<dbReference type="PANTHER" id="PTHR12266">
    <property type="entry name" value="NA+/CA2+ K+ INDEPENDENT EXCHANGER"/>
    <property type="match status" value="1"/>
</dbReference>
<dbReference type="PANTHER" id="PTHR12266:SF25">
    <property type="entry name" value="SODIUM_CALCIUM EXCHANGER 6-RELATED"/>
    <property type="match status" value="1"/>
</dbReference>
<dbReference type="Pfam" id="PF01699">
    <property type="entry name" value="Na_Ca_ex"/>
    <property type="match status" value="2"/>
</dbReference>
<feature type="signal peptide" evidence="1">
    <location>
        <begin position="1"/>
        <end position="19"/>
    </location>
</feature>
<feature type="chain" id="PRO_0000019386" description="Putative sodium/calcium exchanger 6">
    <location>
        <begin position="20"/>
        <end position="590"/>
    </location>
</feature>
<feature type="transmembrane region" description="Helical" evidence="1">
    <location>
        <begin position="97"/>
        <end position="117"/>
    </location>
</feature>
<feature type="transmembrane region" description="Helical" evidence="1">
    <location>
        <begin position="139"/>
        <end position="159"/>
    </location>
</feature>
<feature type="transmembrane region" description="Helical" evidence="1">
    <location>
        <begin position="173"/>
        <end position="193"/>
    </location>
</feature>
<feature type="transmembrane region" description="Helical" evidence="1">
    <location>
        <begin position="208"/>
        <end position="228"/>
    </location>
</feature>
<feature type="transmembrane region" description="Helical" evidence="1">
    <location>
        <begin position="230"/>
        <end position="250"/>
    </location>
</feature>
<feature type="transmembrane region" description="Helical" evidence="1">
    <location>
        <begin position="368"/>
        <end position="388"/>
    </location>
</feature>
<feature type="transmembrane region" description="Helical" evidence="1">
    <location>
        <begin position="397"/>
        <end position="417"/>
    </location>
</feature>
<feature type="transmembrane region" description="Helical" evidence="1">
    <location>
        <begin position="440"/>
        <end position="460"/>
    </location>
</feature>
<feature type="transmembrane region" description="Helical" evidence="1">
    <location>
        <begin position="499"/>
        <end position="519"/>
    </location>
</feature>
<feature type="transmembrane region" description="Helical" evidence="1">
    <location>
        <begin position="535"/>
        <end position="555"/>
    </location>
</feature>
<feature type="transmembrane region" description="Helical" evidence="1">
    <location>
        <begin position="568"/>
        <end position="588"/>
    </location>
</feature>
<protein>
    <recommendedName>
        <fullName>Putative sodium/calcium exchanger 6</fullName>
    </recommendedName>
    <alternativeName>
        <fullName>Na(+)/Ca(2+)-exchange protein 6</fullName>
    </alternativeName>
</protein>
<organism>
    <name type="scientific">Caenorhabditis elegans</name>
    <dbReference type="NCBI Taxonomy" id="6239"/>
    <lineage>
        <taxon>Eukaryota</taxon>
        <taxon>Metazoa</taxon>
        <taxon>Ecdysozoa</taxon>
        <taxon>Nematoda</taxon>
        <taxon>Chromadorea</taxon>
        <taxon>Rhabditida</taxon>
        <taxon>Rhabditina</taxon>
        <taxon>Rhabditomorpha</taxon>
        <taxon>Rhabditoidea</taxon>
        <taxon>Rhabditidae</taxon>
        <taxon>Peloderinae</taxon>
        <taxon>Caenorhabditis</taxon>
    </lineage>
</organism>
<keyword id="KW-0050">Antiport</keyword>
<keyword id="KW-0106">Calcium</keyword>
<keyword id="KW-0109">Calcium transport</keyword>
<keyword id="KW-0406">Ion transport</keyword>
<keyword id="KW-0472">Membrane</keyword>
<keyword id="KW-1185">Reference proteome</keyword>
<keyword id="KW-0732">Signal</keyword>
<keyword id="KW-0915">Sodium</keyword>
<keyword id="KW-0739">Sodium transport</keyword>
<keyword id="KW-0812">Transmembrane</keyword>
<keyword id="KW-1133">Transmembrane helix</keyword>
<keyword id="KW-0813">Transport</keyword>
<gene>
    <name type="primary">ncx-6</name>
    <name type="ORF">C07A9.4</name>
</gene>
<reference key="1">
    <citation type="journal article" date="1994" name="Nature">
        <title>2.2 Mb of contiguous nucleotide sequence from chromosome III of C. elegans.</title>
        <authorList>
            <person name="Wilson R."/>
            <person name="Ainscough R."/>
            <person name="Anderson K."/>
            <person name="Baynes C."/>
            <person name="Berks M."/>
            <person name="Bonfield J."/>
            <person name="Burton J."/>
            <person name="Connell M."/>
            <person name="Copsey T."/>
            <person name="Cooper J."/>
            <person name="Coulson A."/>
            <person name="Craxton M."/>
            <person name="Dear S."/>
            <person name="Du Z."/>
            <person name="Durbin R."/>
            <person name="Favello A."/>
            <person name="Fraser A."/>
            <person name="Fulton L."/>
            <person name="Gardner A."/>
            <person name="Green P."/>
            <person name="Hawkins T."/>
            <person name="Hillier L."/>
            <person name="Jier M."/>
            <person name="Johnston L."/>
            <person name="Jones M."/>
            <person name="Kershaw J."/>
            <person name="Kirsten J."/>
            <person name="Laisster N."/>
            <person name="Latreille P."/>
            <person name="Lightning J."/>
            <person name="Lloyd C."/>
            <person name="Mortimore B."/>
            <person name="O'Callaghan M."/>
            <person name="Parsons J."/>
            <person name="Percy C."/>
            <person name="Rifken L."/>
            <person name="Roopra A."/>
            <person name="Saunders D."/>
            <person name="Shownkeen R."/>
            <person name="Sims M."/>
            <person name="Smaldon N."/>
            <person name="Smith A."/>
            <person name="Smith M."/>
            <person name="Sonnhammer E."/>
            <person name="Staden R."/>
            <person name="Sulston J."/>
            <person name="Thierry-Mieg J."/>
            <person name="Thomas K."/>
            <person name="Vaudin M."/>
            <person name="Vaughan K."/>
            <person name="Waterston R."/>
            <person name="Watson A."/>
            <person name="Weinstock L."/>
            <person name="Wilkinson-Sproat J."/>
            <person name="Wohldman P."/>
        </authorList>
    </citation>
    <scope>NUCLEOTIDE SEQUENCE [LARGE SCALE GENOMIC DNA]</scope>
    <source>
        <strain>Bristol N2</strain>
    </source>
</reference>
<reference key="2">
    <citation type="journal article" date="1998" name="Science">
        <title>Genome sequence of the nematode C. elegans: a platform for investigating biology.</title>
        <authorList>
            <consortium name="The C. elegans sequencing consortium"/>
        </authorList>
    </citation>
    <scope>NUCLEOTIDE SEQUENCE [LARGE SCALE GENOMIC DNA]</scope>
    <source>
        <strain>Bristol N2</strain>
    </source>
</reference>